<keyword id="KW-0002">3D-structure</keyword>
<keyword id="KW-0145">Chemotaxis</keyword>
<keyword id="KW-0202">Cytokine</keyword>
<keyword id="KW-0903">Direct protein sequencing</keyword>
<keyword id="KW-1015">Disulfide bond</keyword>
<keyword id="KW-0395">Inflammatory response</keyword>
<keyword id="KW-1267">Proteomics identification</keyword>
<keyword id="KW-1185">Reference proteome</keyword>
<keyword id="KW-0964">Secreted</keyword>
<keyword id="KW-0732">Signal</keyword>
<dbReference type="EMBL" id="D43767">
    <property type="protein sequence ID" value="BAA07824.1"/>
    <property type="molecule type" value="mRNA"/>
</dbReference>
<dbReference type="EMBL" id="EF064767">
    <property type="protein sequence ID" value="ABK41950.1"/>
    <property type="molecule type" value="Genomic_DNA"/>
</dbReference>
<dbReference type="EMBL" id="AC004382">
    <property type="protein sequence ID" value="AAC24308.1"/>
    <property type="molecule type" value="Genomic_DNA"/>
</dbReference>
<dbReference type="EMBL" id="CH471092">
    <property type="protein sequence ID" value="EAW82921.1"/>
    <property type="molecule type" value="Genomic_DNA"/>
</dbReference>
<dbReference type="EMBL" id="BC069107">
    <property type="protein sequence ID" value="AAH69107.1"/>
    <property type="molecule type" value="mRNA"/>
</dbReference>
<dbReference type="EMBL" id="BC112066">
    <property type="protein sequence ID" value="AAI12067.1"/>
    <property type="molecule type" value="mRNA"/>
</dbReference>
<dbReference type="EMBL" id="BC112068">
    <property type="protein sequence ID" value="AAI12069.1"/>
    <property type="molecule type" value="mRNA"/>
</dbReference>
<dbReference type="CCDS" id="CCDS10780.1"/>
<dbReference type="RefSeq" id="NP_002978.1">
    <property type="nucleotide sequence ID" value="NM_002987.3"/>
</dbReference>
<dbReference type="RefSeq" id="XP_047290404.1">
    <property type="nucleotide sequence ID" value="XM_047434448.1"/>
</dbReference>
<dbReference type="PDB" id="1NR2">
    <property type="method" value="X-ray"/>
    <property type="resolution" value="2.18 A"/>
    <property type="chains" value="A/B=24-94"/>
</dbReference>
<dbReference type="PDB" id="1NR4">
    <property type="method" value="X-ray"/>
    <property type="resolution" value="1.72 A"/>
    <property type="chains" value="A/B/C/D/E/F/G/H=24-94"/>
</dbReference>
<dbReference type="PDB" id="5WK3">
    <property type="method" value="X-ray"/>
    <property type="resolution" value="1.90 A"/>
    <property type="chains" value="A/B/C/D=24-94"/>
</dbReference>
<dbReference type="PDB" id="7S4N">
    <property type="method" value="X-ray"/>
    <property type="resolution" value="1.65 A"/>
    <property type="chains" value="B/D=24-94"/>
</dbReference>
<dbReference type="PDB" id="7SCV">
    <property type="method" value="X-ray"/>
    <property type="resolution" value="2.01 A"/>
    <property type="chains" value="B=24-94"/>
</dbReference>
<dbReference type="PDB" id="8FJ2">
    <property type="method" value="X-ray"/>
    <property type="resolution" value="2.07 A"/>
    <property type="chains" value="B=24-94"/>
</dbReference>
<dbReference type="PDB" id="8SKK">
    <property type="method" value="X-ray"/>
    <property type="resolution" value="2.10 A"/>
    <property type="chains" value="B=24-94"/>
</dbReference>
<dbReference type="PDBsum" id="1NR2"/>
<dbReference type="PDBsum" id="1NR4"/>
<dbReference type="PDBsum" id="5WK3"/>
<dbReference type="PDBsum" id="7S4N"/>
<dbReference type="PDBsum" id="7SCV"/>
<dbReference type="PDBsum" id="8FJ2"/>
<dbReference type="PDBsum" id="8SKK"/>
<dbReference type="SMR" id="Q92583"/>
<dbReference type="BioGRID" id="112264">
    <property type="interactions" value="11"/>
</dbReference>
<dbReference type="DIP" id="DIP-5842N"/>
<dbReference type="FunCoup" id="Q92583">
    <property type="interactions" value="806"/>
</dbReference>
<dbReference type="IntAct" id="Q92583">
    <property type="interactions" value="15"/>
</dbReference>
<dbReference type="STRING" id="9606.ENSP00000219244"/>
<dbReference type="ChEMBL" id="CHEMBL4295915"/>
<dbReference type="iPTMnet" id="Q92583"/>
<dbReference type="PhosphoSitePlus" id="Q92583"/>
<dbReference type="BioMuta" id="CCL17"/>
<dbReference type="DMDM" id="3024711"/>
<dbReference type="MassIVE" id="Q92583"/>
<dbReference type="PaxDb" id="9606-ENSP00000219244"/>
<dbReference type="PeptideAtlas" id="Q92583"/>
<dbReference type="ProteomicsDB" id="75341"/>
<dbReference type="ABCD" id="Q92583">
    <property type="antibodies" value="1 sequenced antibody"/>
</dbReference>
<dbReference type="Antibodypedia" id="3752">
    <property type="antibodies" value="538 antibodies from 36 providers"/>
</dbReference>
<dbReference type="DNASU" id="6361"/>
<dbReference type="Ensembl" id="ENST00000219244.9">
    <property type="protein sequence ID" value="ENSP00000219244.4"/>
    <property type="gene ID" value="ENSG00000102970.11"/>
</dbReference>
<dbReference type="Ensembl" id="ENST00000616880.1">
    <property type="protein sequence ID" value="ENSP00000480147.1"/>
    <property type="gene ID" value="ENSG00000102970.11"/>
</dbReference>
<dbReference type="GeneID" id="6361"/>
<dbReference type="KEGG" id="hsa:6361"/>
<dbReference type="MANE-Select" id="ENST00000219244.9">
    <property type="protein sequence ID" value="ENSP00000219244.4"/>
    <property type="RefSeq nucleotide sequence ID" value="NM_002987.3"/>
    <property type="RefSeq protein sequence ID" value="NP_002978.1"/>
</dbReference>
<dbReference type="UCSC" id="uc002elj.1">
    <property type="organism name" value="human"/>
</dbReference>
<dbReference type="AGR" id="HGNC:10615"/>
<dbReference type="CTD" id="6361"/>
<dbReference type="DisGeNET" id="6361"/>
<dbReference type="GeneCards" id="CCL17"/>
<dbReference type="HGNC" id="HGNC:10615">
    <property type="gene designation" value="CCL17"/>
</dbReference>
<dbReference type="HPA" id="ENSG00000102970">
    <property type="expression patterns" value="Tissue enriched (lymphoid)"/>
</dbReference>
<dbReference type="MIM" id="601520">
    <property type="type" value="gene"/>
</dbReference>
<dbReference type="neXtProt" id="NX_Q92583"/>
<dbReference type="OpenTargets" id="ENSG00000102970"/>
<dbReference type="PharmGKB" id="PA35548"/>
<dbReference type="VEuPathDB" id="HostDB:ENSG00000102970"/>
<dbReference type="eggNOG" id="ENOG502SWZ0">
    <property type="taxonomic scope" value="Eukaryota"/>
</dbReference>
<dbReference type="GeneTree" id="ENSGT01100000263482"/>
<dbReference type="HOGENOM" id="CLU_141716_6_0_1"/>
<dbReference type="InParanoid" id="Q92583"/>
<dbReference type="OMA" id="CCLDYFK"/>
<dbReference type="OrthoDB" id="9447832at2759"/>
<dbReference type="PAN-GO" id="Q92583">
    <property type="GO annotations" value="14 GO annotations based on evolutionary models"/>
</dbReference>
<dbReference type="PhylomeDB" id="Q92583"/>
<dbReference type="TreeFam" id="TF334888"/>
<dbReference type="PathwayCommons" id="Q92583"/>
<dbReference type="Reactome" id="R-HSA-380108">
    <property type="pathway name" value="Chemokine receptors bind chemokines"/>
</dbReference>
<dbReference type="SignaLink" id="Q92583"/>
<dbReference type="BioGRID-ORCS" id="6361">
    <property type="hits" value="10 hits in 1137 CRISPR screens"/>
</dbReference>
<dbReference type="EvolutionaryTrace" id="Q92583"/>
<dbReference type="GeneWiki" id="CCL17"/>
<dbReference type="GenomeRNAi" id="6361"/>
<dbReference type="Pharos" id="Q92583">
    <property type="development level" value="Tbio"/>
</dbReference>
<dbReference type="PRO" id="PR:Q92583"/>
<dbReference type="Proteomes" id="UP000005640">
    <property type="component" value="Chromosome 16"/>
</dbReference>
<dbReference type="RNAct" id="Q92583">
    <property type="molecule type" value="protein"/>
</dbReference>
<dbReference type="Bgee" id="ENSG00000102970">
    <property type="expression patterns" value="Expressed in male germ line stem cell (sensu Vertebrata) in testis and 118 other cell types or tissues"/>
</dbReference>
<dbReference type="GO" id="GO:0005576">
    <property type="term" value="C:extracellular region"/>
    <property type="evidence" value="ECO:0000304"/>
    <property type="project" value="Reactome"/>
</dbReference>
<dbReference type="GO" id="GO:0005615">
    <property type="term" value="C:extracellular space"/>
    <property type="evidence" value="ECO:0007669"/>
    <property type="project" value="UniProtKB-KW"/>
</dbReference>
<dbReference type="GO" id="GO:0008009">
    <property type="term" value="F:chemokine activity"/>
    <property type="evidence" value="ECO:0000304"/>
    <property type="project" value="ProtInc"/>
</dbReference>
<dbReference type="GO" id="GO:0005102">
    <property type="term" value="F:signaling receptor binding"/>
    <property type="evidence" value="ECO:0000304"/>
    <property type="project" value="ProtInc"/>
</dbReference>
<dbReference type="GO" id="GO:0007267">
    <property type="term" value="P:cell-cell signaling"/>
    <property type="evidence" value="ECO:0000304"/>
    <property type="project" value="ProtInc"/>
</dbReference>
<dbReference type="GO" id="GO:0006935">
    <property type="term" value="P:chemotaxis"/>
    <property type="evidence" value="ECO:0000304"/>
    <property type="project" value="ProtInc"/>
</dbReference>
<dbReference type="GO" id="GO:0006955">
    <property type="term" value="P:immune response"/>
    <property type="evidence" value="ECO:0007669"/>
    <property type="project" value="InterPro"/>
</dbReference>
<dbReference type="GO" id="GO:0006954">
    <property type="term" value="P:inflammatory response"/>
    <property type="evidence" value="ECO:0007669"/>
    <property type="project" value="UniProtKB-KW"/>
</dbReference>
<dbReference type="CDD" id="cd00272">
    <property type="entry name" value="Chemokine_CC"/>
    <property type="match status" value="1"/>
</dbReference>
<dbReference type="FunFam" id="2.40.50.40:FF:000012">
    <property type="entry name" value="C-C motif chemokine"/>
    <property type="match status" value="1"/>
</dbReference>
<dbReference type="Gene3D" id="2.40.50.40">
    <property type="match status" value="1"/>
</dbReference>
<dbReference type="InterPro" id="IPR039809">
    <property type="entry name" value="Chemokine_b/g/d"/>
</dbReference>
<dbReference type="InterPro" id="IPR000827">
    <property type="entry name" value="Chemokine_CC_CS"/>
</dbReference>
<dbReference type="InterPro" id="IPR001811">
    <property type="entry name" value="Chemokine_IL8-like_dom"/>
</dbReference>
<dbReference type="InterPro" id="IPR036048">
    <property type="entry name" value="Interleukin_8-like_sf"/>
</dbReference>
<dbReference type="PANTHER" id="PTHR12015:SF111">
    <property type="entry name" value="C-C MOTIF CHEMOKINE 17"/>
    <property type="match status" value="1"/>
</dbReference>
<dbReference type="PANTHER" id="PTHR12015">
    <property type="entry name" value="SMALL INDUCIBLE CYTOKINE A"/>
    <property type="match status" value="1"/>
</dbReference>
<dbReference type="Pfam" id="PF00048">
    <property type="entry name" value="IL8"/>
    <property type="match status" value="1"/>
</dbReference>
<dbReference type="SMART" id="SM00199">
    <property type="entry name" value="SCY"/>
    <property type="match status" value="1"/>
</dbReference>
<dbReference type="SUPFAM" id="SSF54117">
    <property type="entry name" value="Interleukin 8-like chemokines"/>
    <property type="match status" value="1"/>
</dbReference>
<dbReference type="PROSITE" id="PS00472">
    <property type="entry name" value="SMALL_CYTOKINES_CC"/>
    <property type="match status" value="1"/>
</dbReference>
<accession>Q92583</accession>
<accession>A0N0Q9</accession>
<accession>Q2M287</accession>
<sequence>MAPLKMLALVTLLLGASLQHIHAARGTNVGRECCLEYFKGAIPLRKLKTWYQTSEDCSRDAIVFVTVQGRAICSDPNNKRVKNAVKYLQSLERS</sequence>
<evidence type="ECO:0000250" key="1">
    <source>
        <dbReference type="UniProtKB" id="Q9WUZ6"/>
    </source>
</evidence>
<evidence type="ECO:0000269" key="2">
    <source>
    </source>
</evidence>
<evidence type="ECO:0000269" key="3">
    <source>
    </source>
</evidence>
<evidence type="ECO:0000269" key="4">
    <source>
    </source>
</evidence>
<evidence type="ECO:0000269" key="5">
    <source>
    </source>
</evidence>
<evidence type="ECO:0000269" key="6">
    <source>
    </source>
</evidence>
<evidence type="ECO:0000269" key="7">
    <source>
    </source>
</evidence>
<evidence type="ECO:0000269" key="8">
    <source>
    </source>
</evidence>
<evidence type="ECO:0000303" key="9">
    <source>
    </source>
</evidence>
<evidence type="ECO:0000305" key="10"/>
<evidence type="ECO:0000305" key="11">
    <source>
    </source>
</evidence>
<evidence type="ECO:0007829" key="12">
    <source>
        <dbReference type="PDB" id="1NR4"/>
    </source>
</evidence>
<evidence type="ECO:0007829" key="13">
    <source>
        <dbReference type="PDB" id="7S4N"/>
    </source>
</evidence>
<gene>
    <name type="primary">CCL17</name>
    <name type="synonym">SCYA17</name>
    <name type="synonym">TARC</name>
</gene>
<reference key="1">
    <citation type="journal article" date="1996" name="J. Biol. Chem.">
        <title>Molecular cloning of a novel T cell-directed CC chemokine expressed in thymus by signal sequence trap using Epstein-Barr virus vector.</title>
        <authorList>
            <person name="Imai T."/>
            <person name="Yoshida T."/>
            <person name="Baba M."/>
            <person name="Nishimura M."/>
            <person name="Kakizaki M."/>
            <person name="Yoshie O."/>
        </authorList>
    </citation>
    <scope>NUCLEOTIDE SEQUENCE [MRNA]</scope>
    <scope>PROTEIN SEQUENCE OF 24-32</scope>
    <scope>FUNCTION</scope>
    <scope>SUBCELLULAR LOCATION</scope>
    <scope>TISSUE SPECIFICITY</scope>
    <source>
        <tissue>Peripheral blood monocyte</tissue>
    </source>
</reference>
<reference key="2">
    <citation type="submission" date="2006-10" db="EMBL/GenBank/DDBJ databases">
        <authorList>
            <person name="Livingston R.J."/>
            <person name="Shaffer T."/>
            <person name="McFarland I."/>
            <person name="Nguyen C.P."/>
            <person name="Stanaway I.B."/>
            <person name="Rajkumar N."/>
            <person name="Johnson E.J."/>
            <person name="da Ponte S.H."/>
            <person name="Willa H."/>
            <person name="Ahearn M.O."/>
            <person name="Bertucci C."/>
            <person name="Acklestad J."/>
            <person name="Carroll A."/>
            <person name="Swanson J."/>
            <person name="Gildersleeve H.I."/>
            <person name="Nickerson D.A."/>
        </authorList>
    </citation>
    <scope>NUCLEOTIDE SEQUENCE [GENOMIC DNA]</scope>
</reference>
<reference key="3">
    <citation type="journal article" date="1999" name="Genomics">
        <title>Genome duplications and other features in 12 Mb of DNA sequence from human chromosome 16p and 16q.</title>
        <authorList>
            <person name="Loftus B.J."/>
            <person name="Kim U.-J."/>
            <person name="Sneddon V.P."/>
            <person name="Kalush F."/>
            <person name="Brandon R."/>
            <person name="Fuhrmann J."/>
            <person name="Mason T."/>
            <person name="Crosby M.L."/>
            <person name="Barnstead M."/>
            <person name="Cronin L."/>
            <person name="Mays A.D."/>
            <person name="Cao Y."/>
            <person name="Xu R.X."/>
            <person name="Kang H.-L."/>
            <person name="Mitchell S."/>
            <person name="Eichler E.E."/>
            <person name="Harris P.C."/>
            <person name="Venter J.C."/>
            <person name="Adams M.D."/>
        </authorList>
    </citation>
    <scope>NUCLEOTIDE SEQUENCE [LARGE SCALE GENOMIC DNA]</scope>
</reference>
<reference key="4">
    <citation type="submission" date="2005-07" db="EMBL/GenBank/DDBJ databases">
        <authorList>
            <person name="Mural R.J."/>
            <person name="Istrail S."/>
            <person name="Sutton G.G."/>
            <person name="Florea L."/>
            <person name="Halpern A.L."/>
            <person name="Mobarry C.M."/>
            <person name="Lippert R."/>
            <person name="Walenz B."/>
            <person name="Shatkay H."/>
            <person name="Dew I."/>
            <person name="Miller J.R."/>
            <person name="Flanigan M.J."/>
            <person name="Edwards N.J."/>
            <person name="Bolanos R."/>
            <person name="Fasulo D."/>
            <person name="Halldorsson B.V."/>
            <person name="Hannenhalli S."/>
            <person name="Turner R."/>
            <person name="Yooseph S."/>
            <person name="Lu F."/>
            <person name="Nusskern D.R."/>
            <person name="Shue B.C."/>
            <person name="Zheng X.H."/>
            <person name="Zhong F."/>
            <person name="Delcher A.L."/>
            <person name="Huson D.H."/>
            <person name="Kravitz S.A."/>
            <person name="Mouchard L."/>
            <person name="Reinert K."/>
            <person name="Remington K.A."/>
            <person name="Clark A.G."/>
            <person name="Waterman M.S."/>
            <person name="Eichler E.E."/>
            <person name="Adams M.D."/>
            <person name="Hunkapiller M.W."/>
            <person name="Myers E.W."/>
            <person name="Venter J.C."/>
        </authorList>
    </citation>
    <scope>NUCLEOTIDE SEQUENCE [LARGE SCALE GENOMIC DNA]</scope>
</reference>
<reference key="5">
    <citation type="journal article" date="2004" name="Genome Res.">
        <title>The status, quality, and expansion of the NIH full-length cDNA project: the Mammalian Gene Collection (MGC).</title>
        <authorList>
            <consortium name="The MGC Project Team"/>
        </authorList>
    </citation>
    <scope>NUCLEOTIDE SEQUENCE [LARGE SCALE MRNA]</scope>
</reference>
<reference key="6">
    <citation type="journal article" date="1997" name="J. Biol. Chem.">
        <title>The T cell-directed CC chemokine TARC is a highly specific biological ligand for CC chemokine receptor 4.</title>
        <authorList>
            <person name="Imai T."/>
            <person name="Baba M."/>
            <person name="Nishimura M."/>
            <person name="Kakizaki M."/>
            <person name="Takagi S."/>
            <person name="Yoshie O."/>
        </authorList>
    </citation>
    <scope>FUNCTION</scope>
    <scope>CAUTION</scope>
</reference>
<reference key="7">
    <citation type="journal article" date="1998" name="Eur. J. Immunol.">
        <title>Identification of the CC chemokines TARC and macrophage inflammatory protein-1 beta as novel functional ligands for the CCR8 receptor.</title>
        <authorList>
            <person name="Bernardini G."/>
            <person name="Hedrick J."/>
            <person name="Sozzani S."/>
            <person name="Luini W."/>
            <person name="Spinetti G."/>
            <person name="Weiss M."/>
            <person name="Menon S."/>
            <person name="Zlotnik A."/>
            <person name="Mantovani A."/>
            <person name="Santoni A."/>
            <person name="Napolitano M."/>
        </authorList>
    </citation>
    <scope>CAUTION</scope>
</reference>
<reference key="8">
    <citation type="journal article" date="1999" name="Eur. J. Immunol.">
        <title>The assignment of chemokine-chemokine receptor pairs: TARC and MIP-1 beta are not ligands for human CC-chemokine receptor 8.</title>
        <authorList>
            <person name="Garlisi C.G."/>
            <person name="Xiao H."/>
            <person name="Tian F."/>
            <person name="Hedrick J.A."/>
            <person name="Billah M.M."/>
            <person name="Egan R.W."/>
            <person name="Umland S.P."/>
        </authorList>
    </citation>
    <scope>FUNCTION</scope>
    <scope>CAUTION</scope>
</reference>
<reference key="9">
    <citation type="journal article" date="2016" name="J. Clin. Invest.">
        <title>Granulocyte macrophage colony-stimulating factor induces CCL17 production via IRF4 to mediate inflammation.</title>
        <authorList>
            <person name="Achuthan A."/>
            <person name="Cook A.D."/>
            <person name="Lee M.C."/>
            <person name="Saleh R."/>
            <person name="Khiew H.W."/>
            <person name="Chang M.W."/>
            <person name="Louis C."/>
            <person name="Fleetwood A.J."/>
            <person name="Lacey D.C."/>
            <person name="Christensen A.D."/>
            <person name="Frye A.T."/>
            <person name="Lam P.Y."/>
            <person name="Kusano H."/>
            <person name="Nomura K."/>
            <person name="Steiner N."/>
            <person name="Foerster I."/>
            <person name="Nutt S.L."/>
            <person name="Olshansky M."/>
            <person name="Turner S.J."/>
            <person name="Hamilton J.A."/>
        </authorList>
    </citation>
    <scope>SUBCELLULAR LOCATION</scope>
    <scope>INDUCTION BY CSF2</scope>
</reference>
<reference key="10">
    <citation type="journal article" date="2018" name="J. Biol. Chem.">
        <title>Epigenetic and transcriptional regulation of IL4-induced CCL17 production in human monocytes and murine macrophages.</title>
        <authorList>
            <person name="Hsu A.T."/>
            <person name="Lupancu T.J."/>
            <person name="Lee M.C."/>
            <person name="Fleetwood A.J."/>
            <person name="Cook A.D."/>
            <person name="Hamilton J.A."/>
            <person name="Achuthan A."/>
        </authorList>
    </citation>
    <scope>SUBCELLULAR LOCATION</scope>
    <scope>INDUCTION BY IL4</scope>
</reference>
<reference key="11">
    <citation type="journal article" date="2003" name="Acta Crystallogr. D">
        <title>Structures of thymus and activation-regulated chemokine (TARC).</title>
        <authorList>
            <person name="Asojo O.A."/>
            <person name="Boulegue C."/>
            <person name="Hoover D.M."/>
            <person name="Lu W."/>
            <person name="Lubkowski J."/>
        </authorList>
    </citation>
    <scope>X-RAY CRYSTALLOGRAPHY (2.18 ANGSTROMS) OF 24-94</scope>
    <scope>DISULFIDE BONDS</scope>
</reference>
<feature type="signal peptide" evidence="6">
    <location>
        <begin position="1"/>
        <end position="23"/>
    </location>
</feature>
<feature type="chain" id="PRO_0000005211" description="C-C motif chemokine 17">
    <location>
        <begin position="24"/>
        <end position="94"/>
    </location>
</feature>
<feature type="disulfide bond" evidence="3">
    <location>
        <begin position="33"/>
        <end position="57"/>
    </location>
</feature>
<feature type="disulfide bond" evidence="3">
    <location>
        <begin position="34"/>
        <end position="73"/>
    </location>
</feature>
<feature type="sequence variant" id="VAR_048708" description="In dbSNP:rs34693308.">
    <original>K</original>
    <variation>N</variation>
    <location>
        <position position="5"/>
    </location>
</feature>
<feature type="sequence variant" id="VAR_048709" description="In dbSNP:rs34379253.">
    <original>V</original>
    <variation>M</variation>
    <location>
        <position position="67"/>
    </location>
</feature>
<feature type="strand" evidence="12">
    <location>
        <begin position="27"/>
        <end position="29"/>
    </location>
</feature>
<feature type="strand" evidence="13">
    <location>
        <begin position="31"/>
        <end position="33"/>
    </location>
</feature>
<feature type="helix" evidence="13">
    <location>
        <begin position="44"/>
        <end position="46"/>
    </location>
</feature>
<feature type="strand" evidence="13">
    <location>
        <begin position="47"/>
        <end position="52"/>
    </location>
</feature>
<feature type="strand" evidence="13">
    <location>
        <begin position="57"/>
        <end position="59"/>
    </location>
</feature>
<feature type="strand" evidence="13">
    <location>
        <begin position="62"/>
        <end position="66"/>
    </location>
</feature>
<feature type="strand" evidence="13">
    <location>
        <begin position="71"/>
        <end position="74"/>
    </location>
</feature>
<feature type="helix" evidence="13">
    <location>
        <begin position="79"/>
        <end position="90"/>
    </location>
</feature>
<comment type="function">
    <text evidence="1 2 4 6 7">Chemokine, which displays chemotactic activity for T lymphocytes, preferentially Th2 cells, but not monocytes or granulocytes. Therefore plays an important role in a wide range of inflammatory and immunological processes (PubMed:8702936, PubMed:9169480). Acts by binding to CCR4 at T-cell surface (PubMed:10540332, PubMed:9169480). Mediates GM-CSF/CSF2-driven pain and inflammation (PubMed:27525438). In the brain, required to maintain the typical, highly branched morphology of hippocampal microglia under homeostatic conditions. May be important for the appropriate adaptation of microglial morphology and synaptic plasticity to acute lipopolysaccharide (LPS)-induced neuroinflammation (By similarity). Plays a role in wound healing, mainly by inducing fibroblast migration into the wound (By similarity).</text>
</comment>
<comment type="interaction">
    <interactant intactId="EBI-16640146">
        <id>Q92583</id>
    </interactant>
    <interactant intactId="EBI-953695">
        <id>O00585</id>
        <label>CCL21</label>
    </interactant>
    <organismsDiffer>false</organismsDiffer>
    <experiments>2</experiments>
</comment>
<comment type="interaction">
    <interactant intactId="EBI-16640146">
        <id>Q92583</id>
    </interactant>
    <interactant intactId="EBI-7783341">
        <id>O15444</id>
        <label>CCL25</label>
    </interactant>
    <organismsDiffer>false</organismsDiffer>
    <experiments>2</experiments>
</comment>
<comment type="interaction">
    <interactant intactId="EBI-16640146">
        <id>Q92583</id>
    </interactant>
    <interactant intactId="EBI-7783416">
        <id>Q9Y258</id>
        <label>CCL26</label>
    </interactant>
    <organismsDiffer>false</organismsDiffer>
    <experiments>2</experiments>
</comment>
<comment type="interaction">
    <interactant intactId="EBI-16640146">
        <id>Q92583</id>
    </interactant>
    <interactant intactId="EBI-7783254">
        <id>Q9NRJ3</id>
        <label>CCL28</label>
    </interactant>
    <organismsDiffer>false</organismsDiffer>
    <experiments>3</experiments>
</comment>
<comment type="interaction">
    <interactant intactId="EBI-16640146">
        <id>Q92583</id>
    </interactant>
    <interactant intactId="EBI-2848366">
        <id>P13501</id>
        <label>CCL5</label>
    </interactant>
    <organismsDiffer>false</organismsDiffer>
    <experiments>9</experiments>
</comment>
<comment type="interaction">
    <interactant intactId="EBI-16640146">
        <id>Q92583</id>
    </interactant>
    <interactant intactId="EBI-11712923">
        <id>PRO_0000005175</id>
        <label>CCL5</label>
        <dbReference type="UniProtKB" id="P13501"/>
    </interactant>
    <organismsDiffer>false</organismsDiffer>
    <experiments>6</experiments>
</comment>
<comment type="interaction">
    <interactant intactId="EBI-16640146">
        <id>Q92583</id>
    </interactant>
    <interactant intactId="EBI-7847466">
        <id>P51679</id>
        <label>CCR4</label>
    </interactant>
    <organismsDiffer>false</organismsDiffer>
    <experiments>2</experiments>
</comment>
<comment type="interaction">
    <interactant intactId="EBI-16640146">
        <id>Q92583</id>
    </interactant>
    <interactant intactId="EBI-489374">
        <id>P51681</id>
        <label>CCR5</label>
    </interactant>
    <organismsDiffer>false</organismsDiffer>
    <experiments>2</experiments>
</comment>
<comment type="interaction">
    <interactant intactId="EBI-16640146">
        <id>Q92583</id>
    </interactant>
    <interactant intactId="EBI-2565740">
        <id>P02776</id>
        <label>PF4</label>
    </interactant>
    <organismsDiffer>false</organismsDiffer>
    <experiments>2</experiments>
</comment>
<comment type="subcellular location">
    <subcellularLocation>
        <location evidence="4 5 6">Secreted</location>
    </subcellularLocation>
</comment>
<comment type="tissue specificity">
    <text evidence="6">Constitutively expressed in thymus. Detected at lower levels in the lung, colon and small intestine (PubMed:8702936). Expressed in stimulated peripheral blood mononuclear cells, but not in resting cells (PubMed:8702936).</text>
</comment>
<comment type="induction">
    <text evidence="4 5">In monocytes, up-regulated by IL4 and by GM-CSF/CSF2 in an IRF4-dependent manner (at protein level).</text>
</comment>
<comment type="similarity">
    <text evidence="10">Belongs to the intercrine beta (chemokine CC) family.</text>
</comment>
<comment type="caution">
    <text evidence="2 7 8">Although CCL17 was shown to bind to CCR8, additional studies demonstrated that CCR4, not CCR8, was the bona fide CCL17 receptor.</text>
</comment>
<comment type="caution">
    <text evidence="11">Was originally thought to be a ligand for CCR8.</text>
</comment>
<comment type="online information" name="Wikipedia">
    <link uri="https://en.wikipedia.org/wiki/CCL17"/>
    <text>CCL17 entry</text>
</comment>
<protein>
    <recommendedName>
        <fullName>C-C motif chemokine 17</fullName>
    </recommendedName>
    <alternativeName>
        <fullName>CC chemokine TARC</fullName>
    </alternativeName>
    <alternativeName>
        <fullName>Small-inducible cytokine A17</fullName>
    </alternativeName>
    <alternativeName>
        <fullName evidence="9">Thymus and activation-regulated chemokine</fullName>
    </alternativeName>
</protein>
<proteinExistence type="evidence at protein level"/>
<organism>
    <name type="scientific">Homo sapiens</name>
    <name type="common">Human</name>
    <dbReference type="NCBI Taxonomy" id="9606"/>
    <lineage>
        <taxon>Eukaryota</taxon>
        <taxon>Metazoa</taxon>
        <taxon>Chordata</taxon>
        <taxon>Craniata</taxon>
        <taxon>Vertebrata</taxon>
        <taxon>Euteleostomi</taxon>
        <taxon>Mammalia</taxon>
        <taxon>Eutheria</taxon>
        <taxon>Euarchontoglires</taxon>
        <taxon>Primates</taxon>
        <taxon>Haplorrhini</taxon>
        <taxon>Catarrhini</taxon>
        <taxon>Hominidae</taxon>
        <taxon>Homo</taxon>
    </lineage>
</organism>
<name>CCL17_HUMAN</name>